<name>PK3CD_MOUSE</name>
<organism>
    <name type="scientific">Mus musculus</name>
    <name type="common">Mouse</name>
    <dbReference type="NCBI Taxonomy" id="10090"/>
    <lineage>
        <taxon>Eukaryota</taxon>
        <taxon>Metazoa</taxon>
        <taxon>Chordata</taxon>
        <taxon>Craniata</taxon>
        <taxon>Vertebrata</taxon>
        <taxon>Euteleostomi</taxon>
        <taxon>Mammalia</taxon>
        <taxon>Eutheria</taxon>
        <taxon>Euarchontoglires</taxon>
        <taxon>Glires</taxon>
        <taxon>Rodentia</taxon>
        <taxon>Myomorpha</taxon>
        <taxon>Muroidea</taxon>
        <taxon>Muridae</taxon>
        <taxon>Murinae</taxon>
        <taxon>Mus</taxon>
        <taxon>Mus</taxon>
    </lineage>
</organism>
<dbReference type="EC" id="2.7.1.137" evidence="2"/>
<dbReference type="EC" id="2.7.1.153" evidence="2"/>
<dbReference type="EMBL" id="U86587">
    <property type="protein sequence ID" value="AAC25676.1"/>
    <property type="molecule type" value="mRNA"/>
</dbReference>
<dbReference type="EMBL" id="AF532989">
    <property type="protein sequence ID" value="AAN05615.1"/>
    <property type="molecule type" value="Genomic_DNA"/>
</dbReference>
<dbReference type="EMBL" id="AL607078">
    <property type="status" value="NOT_ANNOTATED_CDS"/>
    <property type="molecule type" value="Genomic_DNA"/>
</dbReference>
<dbReference type="EMBL" id="CU207384">
    <property type="status" value="NOT_ANNOTATED_CDS"/>
    <property type="molecule type" value="Genomic_DNA"/>
</dbReference>
<dbReference type="EMBL" id="CH466594">
    <property type="protein sequence ID" value="EDL14872.1"/>
    <property type="molecule type" value="Genomic_DNA"/>
</dbReference>
<dbReference type="CCDS" id="CCDS51380.1">
    <molecule id="O35904-1"/>
</dbReference>
<dbReference type="PIR" id="T43502">
    <property type="entry name" value="T43502"/>
</dbReference>
<dbReference type="RefSeq" id="NP_001157524.1">
    <molecule id="O35904-1"/>
    <property type="nucleotide sequence ID" value="NM_001164052.1"/>
</dbReference>
<dbReference type="RefSeq" id="XP_006538715.1">
    <molecule id="O35904-1"/>
    <property type="nucleotide sequence ID" value="XM_006538652.5"/>
</dbReference>
<dbReference type="PDB" id="2WXF">
    <property type="method" value="X-ray"/>
    <property type="resolution" value="1.90 A"/>
    <property type="chains" value="A=106-1043"/>
</dbReference>
<dbReference type="PDB" id="2WXG">
    <property type="method" value="X-ray"/>
    <property type="resolution" value="2.00 A"/>
    <property type="chains" value="A=106-1043"/>
</dbReference>
<dbReference type="PDB" id="2WXH">
    <property type="method" value="X-ray"/>
    <property type="resolution" value="1.90 A"/>
    <property type="chains" value="A=106-1043"/>
</dbReference>
<dbReference type="PDB" id="2WXI">
    <property type="method" value="X-ray"/>
    <property type="resolution" value="2.80 A"/>
    <property type="chains" value="A=106-1043"/>
</dbReference>
<dbReference type="PDB" id="2WXJ">
    <property type="method" value="X-ray"/>
    <property type="resolution" value="2.60 A"/>
    <property type="chains" value="A=106-1043"/>
</dbReference>
<dbReference type="PDB" id="2WXK">
    <property type="method" value="X-ray"/>
    <property type="resolution" value="2.90 A"/>
    <property type="chains" value="A=106-1043"/>
</dbReference>
<dbReference type="PDB" id="2WXL">
    <property type="method" value="X-ray"/>
    <property type="resolution" value="1.99 A"/>
    <property type="chains" value="A=106-1043"/>
</dbReference>
<dbReference type="PDB" id="2WXM">
    <property type="method" value="X-ray"/>
    <property type="resolution" value="2.80 A"/>
    <property type="chains" value="A=106-1043"/>
</dbReference>
<dbReference type="PDB" id="2WXN">
    <property type="method" value="X-ray"/>
    <property type="resolution" value="2.60 A"/>
    <property type="chains" value="A=106-1043"/>
</dbReference>
<dbReference type="PDB" id="2WXO">
    <property type="method" value="X-ray"/>
    <property type="resolution" value="2.49 A"/>
    <property type="chains" value="A=106-1043"/>
</dbReference>
<dbReference type="PDB" id="2WXP">
    <property type="method" value="X-ray"/>
    <property type="resolution" value="2.30 A"/>
    <property type="chains" value="A=106-1043"/>
</dbReference>
<dbReference type="PDB" id="2WXQ">
    <property type="method" value="X-ray"/>
    <property type="resolution" value="2.70 A"/>
    <property type="chains" value="A=106-1043"/>
</dbReference>
<dbReference type="PDB" id="2WXR">
    <property type="method" value="X-ray"/>
    <property type="resolution" value="2.50 A"/>
    <property type="chains" value="A=106-1043"/>
</dbReference>
<dbReference type="PDB" id="2X38">
    <property type="method" value="X-ray"/>
    <property type="resolution" value="2.20 A"/>
    <property type="chains" value="A=106-1043"/>
</dbReference>
<dbReference type="PDB" id="4AJW">
    <property type="method" value="X-ray"/>
    <property type="resolution" value="2.80 A"/>
    <property type="chains" value="A/B=110-1043"/>
</dbReference>
<dbReference type="PDB" id="4V0I">
    <property type="method" value="X-ray"/>
    <property type="resolution" value="2.54 A"/>
    <property type="chains" value="A/B=106-1043"/>
</dbReference>
<dbReference type="PDB" id="4XE0">
    <property type="method" value="X-ray"/>
    <property type="resolution" value="2.43 A"/>
    <property type="chains" value="A=106-1043"/>
</dbReference>
<dbReference type="PDB" id="5AE8">
    <property type="method" value="X-ray"/>
    <property type="resolution" value="2.42 A"/>
    <property type="chains" value="A=106-1043"/>
</dbReference>
<dbReference type="PDB" id="5AE9">
    <property type="method" value="X-ray"/>
    <property type="resolution" value="2.44 A"/>
    <property type="chains" value="A=106-1043"/>
</dbReference>
<dbReference type="PDB" id="5I4U">
    <property type="method" value="X-ray"/>
    <property type="resolution" value="2.37 A"/>
    <property type="chains" value="A=106-1043"/>
</dbReference>
<dbReference type="PDB" id="5I6U">
    <property type="method" value="X-ray"/>
    <property type="resolution" value="2.84 A"/>
    <property type="chains" value="A=106-1043"/>
</dbReference>
<dbReference type="PDB" id="5IS5">
    <property type="method" value="X-ray"/>
    <property type="resolution" value="2.85 A"/>
    <property type="chains" value="A=1-1043"/>
</dbReference>
<dbReference type="PDB" id="5L72">
    <property type="method" value="X-ray"/>
    <property type="resolution" value="3.06 A"/>
    <property type="chains" value="A=106-1043"/>
</dbReference>
<dbReference type="PDB" id="5NCY">
    <property type="method" value="X-ray"/>
    <property type="resolution" value="1.90 A"/>
    <property type="chains" value="A=106-507, A=509-1043"/>
</dbReference>
<dbReference type="PDB" id="5NCZ">
    <property type="method" value="X-ray"/>
    <property type="resolution" value="1.94 A"/>
    <property type="chains" value="A=106-1043"/>
</dbReference>
<dbReference type="PDB" id="5NGB">
    <property type="method" value="X-ray"/>
    <property type="resolution" value="2.90 A"/>
    <property type="chains" value="A=1-1043"/>
</dbReference>
<dbReference type="PDB" id="5O83">
    <property type="method" value="X-ray"/>
    <property type="resolution" value="2.90 A"/>
    <property type="chains" value="A=106-1043"/>
</dbReference>
<dbReference type="PDB" id="5T27">
    <property type="method" value="X-ray"/>
    <property type="resolution" value="2.60 A"/>
    <property type="chains" value="A=106-1043"/>
</dbReference>
<dbReference type="PDB" id="5T28">
    <property type="method" value="X-ray"/>
    <property type="resolution" value="2.80 A"/>
    <property type="chains" value="A=106-507, A=509-1043"/>
</dbReference>
<dbReference type="PDB" id="5T2B">
    <property type="method" value="X-ray"/>
    <property type="resolution" value="2.30 A"/>
    <property type="chains" value="A=106-1043"/>
</dbReference>
<dbReference type="PDB" id="5T2D">
    <property type="method" value="X-ray"/>
    <property type="resolution" value="2.90 A"/>
    <property type="chains" value="A=106-1043"/>
</dbReference>
<dbReference type="PDB" id="5T2G">
    <property type="method" value="X-ray"/>
    <property type="resolution" value="2.55 A"/>
    <property type="chains" value="A=106-1043"/>
</dbReference>
<dbReference type="PDB" id="5T2I">
    <property type="method" value="X-ray"/>
    <property type="resolution" value="2.30 A"/>
    <property type="chains" value="A=106-1043"/>
</dbReference>
<dbReference type="PDB" id="5T2L">
    <property type="method" value="X-ray"/>
    <property type="resolution" value="2.55 A"/>
    <property type="chains" value="A=106-1043"/>
</dbReference>
<dbReference type="PDB" id="5T2M">
    <property type="method" value="X-ray"/>
    <property type="resolution" value="2.80 A"/>
    <property type="chains" value="A=106-1043"/>
</dbReference>
<dbReference type="PDB" id="5T7F">
    <property type="method" value="X-ray"/>
    <property type="resolution" value="2.60 A"/>
    <property type="chains" value="A/B=106-1043"/>
</dbReference>
<dbReference type="PDB" id="5T8I">
    <property type="method" value="X-ray"/>
    <property type="resolution" value="2.60 A"/>
    <property type="chains" value="A=106-1043"/>
</dbReference>
<dbReference type="PDB" id="6DGT">
    <property type="method" value="X-ray"/>
    <property type="resolution" value="2.60 A"/>
    <property type="chains" value="A=106-1043"/>
</dbReference>
<dbReference type="PDB" id="6EYZ">
    <property type="method" value="X-ray"/>
    <property type="resolution" value="2.20 A"/>
    <property type="chains" value="A=1-1043"/>
</dbReference>
<dbReference type="PDB" id="6EZ6">
    <property type="method" value="X-ray"/>
    <property type="resolution" value="2.04 A"/>
    <property type="chains" value="A=1-1043"/>
</dbReference>
<dbReference type="PDB" id="6GY0">
    <property type="method" value="X-ray"/>
    <property type="resolution" value="2.55 A"/>
    <property type="chains" value="A=106-1043"/>
</dbReference>
<dbReference type="PDB" id="6HI9">
    <property type="method" value="X-ray"/>
    <property type="resolution" value="2.08 A"/>
    <property type="chains" value="A=106-1043"/>
</dbReference>
<dbReference type="PDB" id="6MUL">
    <property type="method" value="X-ray"/>
    <property type="resolution" value="3.09 A"/>
    <property type="chains" value="A/B=106-1043"/>
</dbReference>
<dbReference type="PDB" id="6MUM">
    <property type="method" value="X-ray"/>
    <property type="resolution" value="3.06 A"/>
    <property type="chains" value="A/B=106-1043"/>
</dbReference>
<dbReference type="PDBsum" id="2WXF"/>
<dbReference type="PDBsum" id="2WXG"/>
<dbReference type="PDBsum" id="2WXH"/>
<dbReference type="PDBsum" id="2WXI"/>
<dbReference type="PDBsum" id="2WXJ"/>
<dbReference type="PDBsum" id="2WXK"/>
<dbReference type="PDBsum" id="2WXL"/>
<dbReference type="PDBsum" id="2WXM"/>
<dbReference type="PDBsum" id="2WXN"/>
<dbReference type="PDBsum" id="2WXO"/>
<dbReference type="PDBsum" id="2WXP"/>
<dbReference type="PDBsum" id="2WXQ"/>
<dbReference type="PDBsum" id="2WXR"/>
<dbReference type="PDBsum" id="2X38"/>
<dbReference type="PDBsum" id="4AJW"/>
<dbReference type="PDBsum" id="4V0I"/>
<dbReference type="PDBsum" id="4XE0"/>
<dbReference type="PDBsum" id="5AE8"/>
<dbReference type="PDBsum" id="5AE9"/>
<dbReference type="PDBsum" id="5I4U"/>
<dbReference type="PDBsum" id="5I6U"/>
<dbReference type="PDBsum" id="5IS5"/>
<dbReference type="PDBsum" id="5L72"/>
<dbReference type="PDBsum" id="5NCY"/>
<dbReference type="PDBsum" id="5NCZ"/>
<dbReference type="PDBsum" id="5NGB"/>
<dbReference type="PDBsum" id="5O83"/>
<dbReference type="PDBsum" id="5T27"/>
<dbReference type="PDBsum" id="5T28"/>
<dbReference type="PDBsum" id="5T2B"/>
<dbReference type="PDBsum" id="5T2D"/>
<dbReference type="PDBsum" id="5T2G"/>
<dbReference type="PDBsum" id="5T2I"/>
<dbReference type="PDBsum" id="5T2L"/>
<dbReference type="PDBsum" id="5T2M"/>
<dbReference type="PDBsum" id="5T7F"/>
<dbReference type="PDBsum" id="5T8I"/>
<dbReference type="PDBsum" id="6DGT"/>
<dbReference type="PDBsum" id="6EYZ"/>
<dbReference type="PDBsum" id="6EZ6"/>
<dbReference type="PDBsum" id="6GY0"/>
<dbReference type="PDBsum" id="6HI9"/>
<dbReference type="PDBsum" id="6MUL"/>
<dbReference type="PDBsum" id="6MUM"/>
<dbReference type="SMR" id="O35904"/>
<dbReference type="BioGRID" id="202161">
    <property type="interactions" value="6"/>
</dbReference>
<dbReference type="CORUM" id="O35904"/>
<dbReference type="DIP" id="DIP-39841N"/>
<dbReference type="FunCoup" id="O35904">
    <property type="interactions" value="2026"/>
</dbReference>
<dbReference type="IntAct" id="O35904">
    <property type="interactions" value="8"/>
</dbReference>
<dbReference type="STRING" id="10090.ENSMUSP00000101315"/>
<dbReference type="BindingDB" id="O35904"/>
<dbReference type="ChEMBL" id="CHEMBL2216745"/>
<dbReference type="iPTMnet" id="O35904"/>
<dbReference type="PhosphoSitePlus" id="O35904"/>
<dbReference type="SwissPalm" id="O35904"/>
<dbReference type="jPOST" id="O35904"/>
<dbReference type="PaxDb" id="10090-ENSMUSP00000101315"/>
<dbReference type="ProteomicsDB" id="289600">
    <molecule id="O35904-1"/>
</dbReference>
<dbReference type="ProteomicsDB" id="289601">
    <molecule id="O35904-2"/>
</dbReference>
<dbReference type="Antibodypedia" id="4215">
    <property type="antibodies" value="594 antibodies from 39 providers"/>
</dbReference>
<dbReference type="DNASU" id="18707"/>
<dbReference type="Ensembl" id="ENSMUST00000105689.8">
    <molecule id="O35904-1"/>
    <property type="protein sequence ID" value="ENSMUSP00000101314.2"/>
    <property type="gene ID" value="ENSMUSG00000039936.19"/>
</dbReference>
<dbReference type="GeneID" id="18707"/>
<dbReference type="KEGG" id="mmu:18707"/>
<dbReference type="UCSC" id="uc008vwq.1">
    <molecule id="O35904-1"/>
    <property type="organism name" value="mouse"/>
</dbReference>
<dbReference type="AGR" id="MGI:1098211"/>
<dbReference type="CTD" id="5293"/>
<dbReference type="MGI" id="MGI:1098211">
    <property type="gene designation" value="Pik3cd"/>
</dbReference>
<dbReference type="VEuPathDB" id="HostDB:ENSMUSG00000039936"/>
<dbReference type="eggNOG" id="KOG0904">
    <property type="taxonomic scope" value="Eukaryota"/>
</dbReference>
<dbReference type="GeneTree" id="ENSGT00940000159079"/>
<dbReference type="InParanoid" id="O35904"/>
<dbReference type="OrthoDB" id="67688at2759"/>
<dbReference type="BRENDA" id="2.7.1.153">
    <property type="organism ID" value="3474"/>
</dbReference>
<dbReference type="Reactome" id="R-MMU-1257604">
    <property type="pathway name" value="PIP3 activates AKT signaling"/>
</dbReference>
<dbReference type="Reactome" id="R-MMU-1660499">
    <property type="pathway name" value="Synthesis of PIPs at the plasma membrane"/>
</dbReference>
<dbReference type="Reactome" id="R-MMU-389357">
    <property type="pathway name" value="CD28 dependent PI3K/Akt signaling"/>
</dbReference>
<dbReference type="Reactome" id="R-MMU-512988">
    <property type="pathway name" value="Interleukin-3, Interleukin-5 and GM-CSF signaling"/>
</dbReference>
<dbReference type="Reactome" id="R-MMU-6811558">
    <property type="pathway name" value="PI5P, PP2A and IER3 Regulate PI3K/AKT Signaling"/>
</dbReference>
<dbReference type="Reactome" id="R-MMU-8853659">
    <property type="pathway name" value="RET signaling"/>
</dbReference>
<dbReference type="Reactome" id="R-MMU-9027276">
    <property type="pathway name" value="Erythropoietin activates Phosphoinositide-3-kinase (PI3K)"/>
</dbReference>
<dbReference type="Reactome" id="R-MMU-912526">
    <property type="pathway name" value="Interleukin receptor SHC signaling"/>
</dbReference>
<dbReference type="Reactome" id="R-MMU-912631">
    <property type="pathway name" value="Regulation of signaling by CBL"/>
</dbReference>
<dbReference type="Reactome" id="R-MMU-983695">
    <property type="pathway name" value="Antigen activates B Cell Receptor (BCR) leading to generation of second messengers"/>
</dbReference>
<dbReference type="Reactome" id="R-MMU-9927354">
    <property type="pathway name" value="Co-stimulation by ICOS"/>
</dbReference>
<dbReference type="UniPathway" id="UPA00220"/>
<dbReference type="BioGRID-ORCS" id="18707">
    <property type="hits" value="1 hit in 80 CRISPR screens"/>
</dbReference>
<dbReference type="ChiTaRS" id="Pik3cd">
    <property type="organism name" value="mouse"/>
</dbReference>
<dbReference type="EvolutionaryTrace" id="O35904"/>
<dbReference type="PRO" id="PR:O35904"/>
<dbReference type="Proteomes" id="UP000000589">
    <property type="component" value="Chromosome 4"/>
</dbReference>
<dbReference type="RNAct" id="O35904">
    <property type="molecule type" value="protein"/>
</dbReference>
<dbReference type="Bgee" id="ENSMUSG00000039936">
    <property type="expression patterns" value="Expressed in granulocyte and 170 other cell types or tissues"/>
</dbReference>
<dbReference type="ExpressionAtlas" id="O35904">
    <property type="expression patterns" value="baseline and differential"/>
</dbReference>
<dbReference type="GO" id="GO:0005829">
    <property type="term" value="C:cytosol"/>
    <property type="evidence" value="ECO:0000304"/>
    <property type="project" value="Reactome"/>
</dbReference>
<dbReference type="GO" id="GO:0016303">
    <property type="term" value="F:1-phosphatidylinositol-3-kinase activity"/>
    <property type="evidence" value="ECO:0007669"/>
    <property type="project" value="UniProtKB-EC"/>
</dbReference>
<dbReference type="GO" id="GO:0046934">
    <property type="term" value="F:1-phosphatidylinositol-4,5-bisphosphate 3-kinase activity"/>
    <property type="evidence" value="ECO:0007669"/>
    <property type="project" value="UniProtKB-EC"/>
</dbReference>
<dbReference type="GO" id="GO:0005524">
    <property type="term" value="F:ATP binding"/>
    <property type="evidence" value="ECO:0007669"/>
    <property type="project" value="UniProtKB-KW"/>
</dbReference>
<dbReference type="GO" id="GO:0002250">
    <property type="term" value="P:adaptive immune response"/>
    <property type="evidence" value="ECO:0007669"/>
    <property type="project" value="UniProtKB-KW"/>
</dbReference>
<dbReference type="GO" id="GO:0042113">
    <property type="term" value="P:B cell activation"/>
    <property type="evidence" value="ECO:0000315"/>
    <property type="project" value="MGI"/>
</dbReference>
<dbReference type="GO" id="GO:0001782">
    <property type="term" value="P:B cell homeostasis"/>
    <property type="evidence" value="ECO:0000315"/>
    <property type="project" value="MGI"/>
</dbReference>
<dbReference type="GO" id="GO:0030154">
    <property type="term" value="P:cell differentiation"/>
    <property type="evidence" value="ECO:0007669"/>
    <property type="project" value="UniProtKB-KW"/>
</dbReference>
<dbReference type="GO" id="GO:0007166">
    <property type="term" value="P:cell surface receptor signaling pathway"/>
    <property type="evidence" value="ECO:0000315"/>
    <property type="project" value="MGI"/>
</dbReference>
<dbReference type="GO" id="GO:0006935">
    <property type="term" value="P:chemotaxis"/>
    <property type="evidence" value="ECO:0007669"/>
    <property type="project" value="UniProtKB-KW"/>
</dbReference>
<dbReference type="GO" id="GO:0050832">
    <property type="term" value="P:defense response to fungus"/>
    <property type="evidence" value="ECO:0000315"/>
    <property type="project" value="MGI"/>
</dbReference>
<dbReference type="GO" id="GO:0048872">
    <property type="term" value="P:homeostasis of number of cells"/>
    <property type="evidence" value="ECO:0000315"/>
    <property type="project" value="MGI"/>
</dbReference>
<dbReference type="GO" id="GO:0006954">
    <property type="term" value="P:inflammatory response"/>
    <property type="evidence" value="ECO:0007669"/>
    <property type="project" value="UniProtKB-KW"/>
</dbReference>
<dbReference type="GO" id="GO:0045087">
    <property type="term" value="P:innate immune response"/>
    <property type="evidence" value="ECO:0007669"/>
    <property type="project" value="UniProtKB-KW"/>
</dbReference>
<dbReference type="GO" id="GO:0043491">
    <property type="term" value="P:phosphatidylinositol 3-kinase/protein kinase B signal transduction"/>
    <property type="evidence" value="ECO:0000315"/>
    <property type="project" value="BHF-UCL"/>
</dbReference>
<dbReference type="GO" id="GO:0045766">
    <property type="term" value="P:positive regulation of angiogenesis"/>
    <property type="evidence" value="ECO:0000315"/>
    <property type="project" value="BHF-UCL"/>
</dbReference>
<dbReference type="GO" id="GO:0010628">
    <property type="term" value="P:positive regulation of gene expression"/>
    <property type="evidence" value="ECO:0000315"/>
    <property type="project" value="MGI"/>
</dbReference>
<dbReference type="CDD" id="cd08693">
    <property type="entry name" value="C2_PI3K_class_I_beta_delta"/>
    <property type="match status" value="1"/>
</dbReference>
<dbReference type="CDD" id="cd05174">
    <property type="entry name" value="PI3Kc_IA_delta"/>
    <property type="match status" value="1"/>
</dbReference>
<dbReference type="FunFam" id="1.10.1070.11:FF:000001">
    <property type="entry name" value="Phosphatidylinositol 4,5-bisphosphate 3-kinase catalytic subunit"/>
    <property type="match status" value="1"/>
</dbReference>
<dbReference type="FunFam" id="1.25.40.70:FF:000008">
    <property type="entry name" value="Phosphatidylinositol 4,5-bisphosphate 3-kinase catalytic subunit"/>
    <property type="match status" value="1"/>
</dbReference>
<dbReference type="FunFam" id="2.60.40.150:FF:000046">
    <property type="entry name" value="Phosphatidylinositol 4,5-bisphosphate 3-kinase catalytic subunit"/>
    <property type="match status" value="1"/>
</dbReference>
<dbReference type="FunFam" id="3.10.20.770:FF:000002">
    <property type="entry name" value="Phosphatidylinositol 4,5-bisphosphate 3-kinase catalytic subunit"/>
    <property type="match status" value="1"/>
</dbReference>
<dbReference type="FunFam" id="3.30.1010.10:FF:000005">
    <property type="entry name" value="Phosphatidylinositol 4,5-bisphosphate 3-kinase catalytic subunit beta"/>
    <property type="match status" value="1"/>
</dbReference>
<dbReference type="Gene3D" id="3.10.20.770">
    <property type="match status" value="1"/>
</dbReference>
<dbReference type="Gene3D" id="2.60.40.150">
    <property type="entry name" value="C2 domain"/>
    <property type="match status" value="1"/>
</dbReference>
<dbReference type="Gene3D" id="1.10.1070.11">
    <property type="entry name" value="Phosphatidylinositol 3-/4-kinase, catalytic domain"/>
    <property type="match status" value="1"/>
</dbReference>
<dbReference type="Gene3D" id="3.30.1010.10">
    <property type="entry name" value="Phosphatidylinositol 3-kinase Catalytic Subunit, Chain A, domain 4"/>
    <property type="match status" value="1"/>
</dbReference>
<dbReference type="Gene3D" id="1.25.40.70">
    <property type="entry name" value="Phosphatidylinositol 3-kinase, accessory domain (PIK)"/>
    <property type="match status" value="1"/>
</dbReference>
<dbReference type="InterPro" id="IPR016024">
    <property type="entry name" value="ARM-type_fold"/>
</dbReference>
<dbReference type="InterPro" id="IPR035892">
    <property type="entry name" value="C2_domain_sf"/>
</dbReference>
<dbReference type="InterPro" id="IPR011009">
    <property type="entry name" value="Kinase-like_dom_sf"/>
</dbReference>
<dbReference type="InterPro" id="IPR000403">
    <property type="entry name" value="PI3/4_kinase_cat_dom"/>
</dbReference>
<dbReference type="InterPro" id="IPR036940">
    <property type="entry name" value="PI3/4_kinase_cat_sf"/>
</dbReference>
<dbReference type="InterPro" id="IPR018936">
    <property type="entry name" value="PI3/4_kinase_CS"/>
</dbReference>
<dbReference type="InterPro" id="IPR002420">
    <property type="entry name" value="PI3K-type_C2_dom"/>
</dbReference>
<dbReference type="InterPro" id="IPR003113">
    <property type="entry name" value="PI3K_ABD"/>
</dbReference>
<dbReference type="InterPro" id="IPR001263">
    <property type="entry name" value="PI3K_accessory_dom"/>
</dbReference>
<dbReference type="InterPro" id="IPR042236">
    <property type="entry name" value="PI3K_accessory_sf"/>
</dbReference>
<dbReference type="InterPro" id="IPR000341">
    <property type="entry name" value="PI3K_Ras-bd_dom"/>
</dbReference>
<dbReference type="InterPro" id="IPR037703">
    <property type="entry name" value="PI3Kdelta_dom"/>
</dbReference>
<dbReference type="InterPro" id="IPR015433">
    <property type="entry name" value="PI_Kinase"/>
</dbReference>
<dbReference type="InterPro" id="IPR029071">
    <property type="entry name" value="Ubiquitin-like_domsf"/>
</dbReference>
<dbReference type="PANTHER" id="PTHR10048:SF35">
    <property type="entry name" value="PHOSPHATIDYLINOSITOL 4,5-BISPHOSPHATE 3-KINASE CATALYTIC SUBUNIT DELTA ISOFORM"/>
    <property type="match status" value="1"/>
</dbReference>
<dbReference type="PANTHER" id="PTHR10048">
    <property type="entry name" value="PHOSPHATIDYLINOSITOL KINASE"/>
    <property type="match status" value="1"/>
</dbReference>
<dbReference type="Pfam" id="PF00454">
    <property type="entry name" value="PI3_PI4_kinase"/>
    <property type="match status" value="1"/>
</dbReference>
<dbReference type="Pfam" id="PF00792">
    <property type="entry name" value="PI3K_C2"/>
    <property type="match status" value="1"/>
</dbReference>
<dbReference type="Pfam" id="PF02192">
    <property type="entry name" value="PI3K_p85B"/>
    <property type="match status" value="1"/>
</dbReference>
<dbReference type="Pfam" id="PF00794">
    <property type="entry name" value="PI3K_rbd"/>
    <property type="match status" value="1"/>
</dbReference>
<dbReference type="Pfam" id="PF00613">
    <property type="entry name" value="PI3Ka"/>
    <property type="match status" value="1"/>
</dbReference>
<dbReference type="SMART" id="SM00142">
    <property type="entry name" value="PI3K_C2"/>
    <property type="match status" value="1"/>
</dbReference>
<dbReference type="SMART" id="SM00143">
    <property type="entry name" value="PI3K_p85B"/>
    <property type="match status" value="1"/>
</dbReference>
<dbReference type="SMART" id="SM00144">
    <property type="entry name" value="PI3K_rbd"/>
    <property type="match status" value="1"/>
</dbReference>
<dbReference type="SMART" id="SM00145">
    <property type="entry name" value="PI3Ka"/>
    <property type="match status" value="1"/>
</dbReference>
<dbReference type="SMART" id="SM00146">
    <property type="entry name" value="PI3Kc"/>
    <property type="match status" value="1"/>
</dbReference>
<dbReference type="SUPFAM" id="SSF48371">
    <property type="entry name" value="ARM repeat"/>
    <property type="match status" value="1"/>
</dbReference>
<dbReference type="SUPFAM" id="SSF49562">
    <property type="entry name" value="C2 domain (Calcium/lipid-binding domain, CaLB)"/>
    <property type="match status" value="1"/>
</dbReference>
<dbReference type="SUPFAM" id="SSF56112">
    <property type="entry name" value="Protein kinase-like (PK-like)"/>
    <property type="match status" value="1"/>
</dbReference>
<dbReference type="SUPFAM" id="SSF54236">
    <property type="entry name" value="Ubiquitin-like"/>
    <property type="match status" value="1"/>
</dbReference>
<dbReference type="PROSITE" id="PS51547">
    <property type="entry name" value="C2_PI3K"/>
    <property type="match status" value="1"/>
</dbReference>
<dbReference type="PROSITE" id="PS00915">
    <property type="entry name" value="PI3_4_KINASE_1"/>
    <property type="match status" value="1"/>
</dbReference>
<dbReference type="PROSITE" id="PS00916">
    <property type="entry name" value="PI3_4_KINASE_2"/>
    <property type="match status" value="1"/>
</dbReference>
<dbReference type="PROSITE" id="PS50290">
    <property type="entry name" value="PI3_4_KINASE_3"/>
    <property type="match status" value="1"/>
</dbReference>
<dbReference type="PROSITE" id="PS51544">
    <property type="entry name" value="PI3K_ABD"/>
    <property type="match status" value="1"/>
</dbReference>
<dbReference type="PROSITE" id="PS51546">
    <property type="entry name" value="PI3K_RBD"/>
    <property type="match status" value="1"/>
</dbReference>
<dbReference type="PROSITE" id="PS51545">
    <property type="entry name" value="PIK_HELICAL"/>
    <property type="match status" value="1"/>
</dbReference>
<comment type="function">
    <text evidence="9 10 12 13 14 15 16 18">Phosphoinositide-3-kinase (PI3K) phosphorylates phosphatidylinositol (PI) and its phosphorylated derivatives at position 3 of the inositol ring to produce 3-phosphoinositides. Uses ATP and PtdIns(4,5)P2 (phosphatidylinositol 4,5-bisphosphate) to generate phosphatidylinositol 3,4,5-trisphosphate (PIP3) (PubMed:9235916). PIP3 plays a key role by recruiting PH domain-containing proteins to the membrane, including AKT1 and PDPK1, activating signaling cascades involved in cell growth, survival, proliferation, motility and morphology. Mediates immune responses. Plays a role in B-cell development, proliferation, migration, and function. Required for B-cell receptor (BCR) signaling. Mediates B-cell proliferation response to anti-IgM, anti-CD40 and IL4 stimulation. Promotes cytokine production in response to TLR4 and TLR9. Required for antibody class switch mediated by TLR9. Involved in the antigen presentation function of B-cells. Involved in B-cell chemotaxis in response to CXCL13 and sphingosine 1-phosphate (S1P). Required for proliferation, signaling and cytokine production of naive, effector and memory T-cells. Required for T-cell receptor (TCR) signaling. Mediates TCR signaling events at the immune synapse. Activation by TCR leads to antigen-dependent memory T-cell migration and retention to antigenic tissues. Together with PIK3CG participates in T-cell development. Contributes to T-helper cell expansion and differentiation. Required for T-cell migration mediated by homing receptors SELL/CD62L, CCR7 and S1PR1 and antigen dependent recruitment of T-cells. Together with PIK3CG is involved in natural killer (NK) cell development and migration towards the sites of inflammation. Participates in NK cell receptor activation. Plays a role in NK cell maturation and cytokine production. Together with PIK3CG is involved in neutrophil chemotaxis and extravasation. Together with PIK3CG participates in neutrophil respiratory burst. Plays important roles in mast-cell development and mast cell mediated allergic response. Involved in stem cell factor (SCF)-mediated proliferation, adhesion and migration. Required for allergen-IgE-induced degranulation and cytokine release. The lipid kinase activity is required for its biological function.</text>
</comment>
<comment type="catalytic activity">
    <reaction evidence="2">
        <text>a 1,2-diacyl-sn-glycero-3-phospho-(1D-myo-inositol-4,5-bisphosphate) + ATP = a 1,2-diacyl-sn-glycero-3-phospho-(1D-myo-inositol-3,4,5-trisphosphate) + ADP + H(+)</text>
        <dbReference type="Rhea" id="RHEA:21292"/>
        <dbReference type="ChEBI" id="CHEBI:15378"/>
        <dbReference type="ChEBI" id="CHEBI:30616"/>
        <dbReference type="ChEBI" id="CHEBI:57836"/>
        <dbReference type="ChEBI" id="CHEBI:58456"/>
        <dbReference type="ChEBI" id="CHEBI:456216"/>
        <dbReference type="EC" id="2.7.1.153"/>
    </reaction>
    <physiologicalReaction direction="left-to-right" evidence="2">
        <dbReference type="Rhea" id="RHEA:21293"/>
    </physiologicalReaction>
</comment>
<comment type="catalytic activity">
    <reaction evidence="2">
        <text>a 1,2-diacyl-sn-glycero-3-phospho-(1D-myo-inositol) + ATP = a 1,2-diacyl-sn-glycero-3-phospho-(1D-myo-inositol-3-phosphate) + ADP + H(+)</text>
        <dbReference type="Rhea" id="RHEA:12709"/>
        <dbReference type="ChEBI" id="CHEBI:15378"/>
        <dbReference type="ChEBI" id="CHEBI:30616"/>
        <dbReference type="ChEBI" id="CHEBI:57880"/>
        <dbReference type="ChEBI" id="CHEBI:58088"/>
        <dbReference type="ChEBI" id="CHEBI:456216"/>
        <dbReference type="EC" id="2.7.1.137"/>
    </reaction>
    <physiologicalReaction direction="left-to-right" evidence="2">
        <dbReference type="Rhea" id="RHEA:12710"/>
    </physiologicalReaction>
</comment>
<comment type="catalytic activity">
    <reaction evidence="2">
        <text>1-octadecanoyl-2-(5Z,8Z,11Z,14Z)-eicosatetraenoyl-sn-glycero-3-phospho-1D-myo-inositol 4,5-bisphosphate + ATP = 1-octadecanoyl-2-(5Z,8Z,11Z,14Z-eicosatetraenoyl)-sn-glycero-3-phospho-(1D-myo-inositol 3,4,5-triphosphate) + ADP + H(+)</text>
        <dbReference type="Rhea" id="RHEA:43396"/>
        <dbReference type="ChEBI" id="CHEBI:15378"/>
        <dbReference type="ChEBI" id="CHEBI:30616"/>
        <dbReference type="ChEBI" id="CHEBI:77137"/>
        <dbReference type="ChEBI" id="CHEBI:83243"/>
        <dbReference type="ChEBI" id="CHEBI:456216"/>
    </reaction>
    <physiologicalReaction direction="left-to-right" evidence="2">
        <dbReference type="Rhea" id="RHEA:43397"/>
    </physiologicalReaction>
</comment>
<comment type="activity regulation">
    <text evidence="12 14 16">Activated by growth factors and cytokine receptors through a tyrosine-kinase-dependent mechanism. Activated by RAS. IC87114 inhibits lipid kinase activity and is selective in cells at doses up to 5-10 uM. Among other effects, IC87114 reduces allergic responses, prevents the recruitment of antigen-specific T cells into target tissue, and affects natural killer cell chemotaxis.</text>
</comment>
<comment type="pathway">
    <text evidence="20">Phospholipid metabolism; phosphatidylinositol phosphate biosynthesis.</text>
</comment>
<comment type="subunit">
    <text evidence="11">Heterodimer of a catalytic subunit PIK3CD and a p85 regulatory subunit (PIK3R1, PIK3R2 or PIK3R3). Interacts with ERAS and HRAS.</text>
</comment>
<comment type="interaction">
    <interactant intactId="EBI-6470774">
        <id>O35904-2</id>
    </interactant>
    <interactant intactId="EBI-641764">
        <id>P26450</id>
        <label>Pik3r1</label>
    </interactant>
    <organismsDiffer>false</organismsDiffer>
    <experiments>2</experiments>
</comment>
<comment type="subcellular location">
    <subcellularLocation>
        <location evidence="1">Cytoplasm</location>
    </subcellularLocation>
</comment>
<comment type="alternative products">
    <event type="alternative splicing"/>
    <isoform>
        <id>O35904-1</id>
        <name>1</name>
        <name>p110-delta</name>
        <sequence type="displayed"/>
    </isoform>
    <isoform>
        <id>O35904-2</id>
        <name>2</name>
        <sequence type="described" ref="VSP_044411 VSP_044412"/>
    </isoform>
</comment>
<comment type="tissue specificity">
    <text evidence="17 18">Abundantly expressed in adult mouse spleen as well as in testis (PubMed:9235916). Isoform 1 is expressed in spleen and lung (at protein level). Isoform 1 is expressed predominantly in leukocytes.</text>
</comment>
<comment type="PTM">
    <text evidence="1">Autophosphorylation on Ser-1038 results in the almost complete inactivation of the lipid kinase activity.</text>
</comment>
<comment type="disruption phenotype">
    <text evidence="9 10 12 14 15">Null mutants are viable and fertile but display defective adaptive and innate immune responses due to signaling defects in multiple cell types including B-, T- and mast and natural killer cells.</text>
</comment>
<comment type="similarity">
    <text evidence="4 6 7">Belongs to the PI3/PI4-kinase family.</text>
</comment>
<keyword id="KW-0002">3D-structure</keyword>
<keyword id="KW-1064">Adaptive immunity</keyword>
<keyword id="KW-0025">Alternative splicing</keyword>
<keyword id="KW-0067">ATP-binding</keyword>
<keyword id="KW-0145">Chemotaxis</keyword>
<keyword id="KW-0963">Cytoplasm</keyword>
<keyword id="KW-0221">Differentiation</keyword>
<keyword id="KW-0391">Immunity</keyword>
<keyword id="KW-0395">Inflammatory response</keyword>
<keyword id="KW-0399">Innate immunity</keyword>
<keyword id="KW-0418">Kinase</keyword>
<keyword id="KW-0443">Lipid metabolism</keyword>
<keyword id="KW-0547">Nucleotide-binding</keyword>
<keyword id="KW-0597">Phosphoprotein</keyword>
<keyword id="KW-1185">Reference proteome</keyword>
<keyword id="KW-0808">Transferase</keyword>
<sequence length="1043" mass="119712">MPPGVDCPMEFWTKEESQSVVVDFLLPTGVYLNFPVSRNANLSTIKQVLWHRAQYEPLFHMLSDPEAYVFTCVNQTAEQQELEDEQRRLCDIQPFLPVLRLVAREGDRVKKLINSQISLLIGKGLHEFDSLRDPEVNDFRTKMRQFCEEAAAHRQQLGWVEWLQYSFPLQLEPSARGWRAGLLRVSNRALLVNVKFEGSEESFTFQVSTKDMPLALMACALRKKATVFRQPLVEQPEEYALQVNGRHEYLYGNYPLCHFQYICSCLHSGLTPHLTMVHSSSILAMRDEQSNPAPQVQKPRAKPPPIPAKKPSSVSLWSLEQPFSIELIEGRKVNADERMKLVVQAGLFHGNEMLCKTVSSSEVNVCSEPVWKQRLEFDISVCDLPRMARLCFALYAVVEKAKKARSTKKKSKKADCPIAWANLMLFDYKDQLKTGERCLYMWPSVPDEKGELLNPAGTVRGNPNTESAAALVIYLPEVAPHPVYFPALEKILELGRHGERGRITEEELQLREILERRGSGELYEHEKDLVWKMRHEVQEHFPEALARLLLVTKWNKHEDVAQMLYLLCSWPELPVLSALELLDFSFPDCYVGSFAIKSLRKLTDDELFQYLLQLVQVLKYESYLDCELTKFLLGRALANRKIGHFLFWHLRSEMHVPSVALRFGLIMEAYCRGSTHHMKVLMKQGEALSKLKALNDFVKVSSQKTTKPQTKEMMHMCMRQETYMEALSHLQSPLDPSTLLEEVCVEQCTFMDSKMKPLWIMYSSEEAGSAGNVGIIFKNGDDLRQDMLTLQMIQLMDVLWKQEGLDLRMTPYGCLPTGDRTGLIEVVLHSDTIANIQLNKSNMAATAAFNKDALLNWLKSKNPGEALDRAIEEFTLSCAGYCVATYVLGIGDRHSDNIMIRESGQLFHIDFGHFLGNFKTKFGINRERVPFILTYDFVHVIQQGKTNNSEKFERFRGYCERAYTILRRHGLLFLHLFALMRAAGLPELSCSKDIQYLKDSLALGKTEEEALKHFRVKFNEALRESWKTKVNWLAHNVSKDNRQ</sequence>
<gene>
    <name type="primary">Pik3cd</name>
</gene>
<evidence type="ECO:0000250" key="1"/>
<evidence type="ECO:0000250" key="2">
    <source>
        <dbReference type="UniProtKB" id="O00329"/>
    </source>
</evidence>
<evidence type="ECO:0000255" key="3">
    <source>
        <dbReference type="PROSITE-ProRule" id="PRU00269"/>
    </source>
</evidence>
<evidence type="ECO:0000255" key="4">
    <source>
        <dbReference type="PROSITE-ProRule" id="PRU00877"/>
    </source>
</evidence>
<evidence type="ECO:0000255" key="5">
    <source>
        <dbReference type="PROSITE-ProRule" id="PRU00878"/>
    </source>
</evidence>
<evidence type="ECO:0000255" key="6">
    <source>
        <dbReference type="PROSITE-ProRule" id="PRU00879"/>
    </source>
</evidence>
<evidence type="ECO:0000255" key="7">
    <source>
        <dbReference type="PROSITE-ProRule" id="PRU00880"/>
    </source>
</evidence>
<evidence type="ECO:0000256" key="8">
    <source>
        <dbReference type="SAM" id="MobiDB-lite"/>
    </source>
</evidence>
<evidence type="ECO:0000269" key="9">
    <source>
    </source>
</evidence>
<evidence type="ECO:0000269" key="10">
    <source>
    </source>
</evidence>
<evidence type="ECO:0000269" key="11">
    <source>
    </source>
</evidence>
<evidence type="ECO:0000269" key="12">
    <source>
    </source>
</evidence>
<evidence type="ECO:0000269" key="13">
    <source>
    </source>
</evidence>
<evidence type="ECO:0000269" key="14">
    <source>
    </source>
</evidence>
<evidence type="ECO:0000269" key="15">
    <source>
    </source>
</evidence>
<evidence type="ECO:0000269" key="16">
    <source>
    </source>
</evidence>
<evidence type="ECO:0000269" key="17">
    <source>
    </source>
</evidence>
<evidence type="ECO:0000269" key="18">
    <source>
    </source>
</evidence>
<evidence type="ECO:0000305" key="19"/>
<evidence type="ECO:0000305" key="20">
    <source>
    </source>
</evidence>
<evidence type="ECO:0007829" key="21">
    <source>
        <dbReference type="PDB" id="2WXF"/>
    </source>
</evidence>
<evidence type="ECO:0007829" key="22">
    <source>
        <dbReference type="PDB" id="2WXK"/>
    </source>
</evidence>
<evidence type="ECO:0007829" key="23">
    <source>
        <dbReference type="PDB" id="2WXR"/>
    </source>
</evidence>
<evidence type="ECO:0007829" key="24">
    <source>
        <dbReference type="PDB" id="4V0I"/>
    </source>
</evidence>
<evidence type="ECO:0007829" key="25">
    <source>
        <dbReference type="PDB" id="4XE0"/>
    </source>
</evidence>
<evidence type="ECO:0007829" key="26">
    <source>
        <dbReference type="PDB" id="5L72"/>
    </source>
</evidence>
<evidence type="ECO:0007829" key="27">
    <source>
        <dbReference type="PDB" id="5NCZ"/>
    </source>
</evidence>
<evidence type="ECO:0007829" key="28">
    <source>
        <dbReference type="PDB" id="5O83"/>
    </source>
</evidence>
<evidence type="ECO:0007829" key="29">
    <source>
        <dbReference type="PDB" id="6EZ6"/>
    </source>
</evidence>
<protein>
    <recommendedName>
        <fullName>Phosphatidylinositol 4,5-bisphosphate 3-kinase catalytic subunit delta isoform</fullName>
        <shortName>PI3-kinase subunit delta</shortName>
        <shortName>PI3K-delta</shortName>
        <shortName>PI3Kdelta</shortName>
        <shortName>PtdIns-3-kinase subunit delta</shortName>
        <ecNumber evidence="2">2.7.1.137</ecNumber>
        <ecNumber evidence="2">2.7.1.153</ecNumber>
    </recommendedName>
    <alternativeName>
        <fullName>Phosphatidylinositol 4,5-bisphosphate 3-kinase 110 kDa catalytic subunit delta</fullName>
        <shortName>PtdIns-3-kinase subunit p110-delta</shortName>
        <shortName>p110delta</shortName>
    </alternativeName>
</protein>
<proteinExistence type="evidence at protein level"/>
<reference key="1">
    <citation type="journal article" date="1997" name="J. Biol. Chem.">
        <title>p110delta, a novel phosphatidylinositol 3-kinase catalytic subunit that associates with p85 and is expressed predominantly in leukocytes.</title>
        <authorList>
            <person name="Chantry D."/>
            <person name="Vojtek A."/>
            <person name="Kashishian A."/>
            <person name="Holtzman D.A."/>
            <person name="Wood C."/>
            <person name="Gray P.W."/>
            <person name="Cooper J.A."/>
            <person name="Hoekstra M.F."/>
        </authorList>
    </citation>
    <scope>NUCLEOTIDE SEQUENCE [MRNA] (ISOFORM 1)</scope>
    <scope>FUNCTION</scope>
    <scope>TISSUE SPECIFICITY</scope>
    <source>
        <tissue>Spleen</tissue>
    </source>
</reference>
<reference key="2">
    <citation type="journal article" date="2002" name="Science">
        <title>Impaired B and T cell antigen receptor signaling in p110delta PI 3-kinase mutant mice.</title>
        <authorList>
            <person name="Okkenhaug K."/>
            <person name="Bilancio A."/>
            <person name="Farjot G."/>
            <person name="Priddle H."/>
            <person name="Sancho S."/>
            <person name="Peskett E."/>
            <person name="Pearce W."/>
            <person name="Meek S.E."/>
            <person name="Salpekar A."/>
            <person name="Waterfield M.D."/>
            <person name="Smith A.J."/>
            <person name="Vanhaesebroeck B."/>
        </authorList>
    </citation>
    <scope>NUCLEOTIDE SEQUENCE [MRNA] (ISOFORM 1)</scope>
    <scope>FUNCTION</scope>
    <scope>DISRUPTION PHENOTYPE</scope>
    <scope>MUTAGENESIS OF ASP-910</scope>
    <source>
        <strain>129P2</strain>
    </source>
</reference>
<reference key="3">
    <citation type="journal article" date="2009" name="PLoS Biol.">
        <title>Lineage-specific biology revealed by a finished genome assembly of the mouse.</title>
        <authorList>
            <person name="Church D.M."/>
            <person name="Goodstadt L."/>
            <person name="Hillier L.W."/>
            <person name="Zody M.C."/>
            <person name="Goldstein S."/>
            <person name="She X."/>
            <person name="Bult C.J."/>
            <person name="Agarwala R."/>
            <person name="Cherry J.L."/>
            <person name="DiCuccio M."/>
            <person name="Hlavina W."/>
            <person name="Kapustin Y."/>
            <person name="Meric P."/>
            <person name="Maglott D."/>
            <person name="Birtle Z."/>
            <person name="Marques A.C."/>
            <person name="Graves T."/>
            <person name="Zhou S."/>
            <person name="Teague B."/>
            <person name="Potamousis K."/>
            <person name="Churas C."/>
            <person name="Place M."/>
            <person name="Herschleb J."/>
            <person name="Runnheim R."/>
            <person name="Forrest D."/>
            <person name="Amos-Landgraf J."/>
            <person name="Schwartz D.C."/>
            <person name="Cheng Z."/>
            <person name="Lindblad-Toh K."/>
            <person name="Eichler E.E."/>
            <person name="Ponting C.P."/>
        </authorList>
    </citation>
    <scope>NUCLEOTIDE SEQUENCE [LARGE SCALE GENOMIC DNA]</scope>
    <source>
        <strain>C57BL/6J</strain>
    </source>
</reference>
<reference key="4">
    <citation type="submission" date="2005-07" db="EMBL/GenBank/DDBJ databases">
        <authorList>
            <person name="Mural R.J."/>
            <person name="Adams M.D."/>
            <person name="Myers E.W."/>
            <person name="Smith H.O."/>
            <person name="Venter J.C."/>
        </authorList>
    </citation>
    <scope>NUCLEOTIDE SEQUENCE [LARGE SCALE GENOMIC DNA]</scope>
</reference>
<reference key="5">
    <citation type="journal article" date="2002" name="J. Exp. Med.">
        <title>A crucial role for the p110delta subunit of phosphatidylinositol 3-kinase in B cell development and activation.</title>
        <authorList>
            <person name="Clayton E."/>
            <person name="Bardi G."/>
            <person name="Bell S.E."/>
            <person name="Chantry D."/>
            <person name="Downes C.P."/>
            <person name="Gray A."/>
            <person name="Humphries L.A."/>
            <person name="Rawlings D."/>
            <person name="Reynolds H."/>
            <person name="Vigorito E."/>
            <person name="Turner M."/>
        </authorList>
    </citation>
    <scope>FUNCTION IN B-CELLS</scope>
    <scope>DISRUPTION PHENOTYPE</scope>
</reference>
<reference key="6">
    <citation type="journal article" date="2003" name="Nature">
        <title>Role of Eras in promoting tumor-like properties in mouse embryonic stem cells.</title>
        <authorList>
            <person name="Takahashi K."/>
            <person name="Mitsui K."/>
            <person name="Yamanaka S."/>
        </authorList>
    </citation>
    <scope>INTERACTION WITH ERAS</scope>
</reference>
<reference key="7">
    <citation type="journal article" date="2004" name="Nature">
        <title>Essential role for the p110delta phosphoinositide 3-kinase in the allergic response.</title>
        <authorList>
            <person name="Ali K."/>
            <person name="Bilancio A."/>
            <person name="Thomas M."/>
            <person name="Pearce W."/>
            <person name="Gilfillan A.M."/>
            <person name="Tkaczyk C."/>
            <person name="Kuehn N."/>
            <person name="Gray A."/>
            <person name="Giddings J."/>
            <person name="Peskett E."/>
            <person name="Fox R."/>
            <person name="Bruce I."/>
            <person name="Walker C."/>
            <person name="Sawyer C."/>
            <person name="Okkenhaug K."/>
            <person name="Finan P."/>
            <person name="Vanhaesebroeck B."/>
        </authorList>
    </citation>
    <scope>FUNCTION IN MAST CELLS</scope>
    <scope>ACTIVITY REGULATION</scope>
    <scope>DISRUPTION PHENOTYPE</scope>
    <scope>MUTAGENESIS OF ASP-910</scope>
</reference>
<reference key="8">
    <citation type="journal article" date="2005" name="J. Immunol.">
        <title>T cell development requires the combined activities of the p110gamma and p110delta catalytic isoforms of phosphatidylinositol 3-kinase.</title>
        <authorList>
            <person name="Webb L.M.C."/>
            <person name="Vigorito E."/>
            <person name="Wymann M.P."/>
            <person name="Hirsch E."/>
            <person name="Turner M."/>
        </authorList>
    </citation>
    <scope>FUNCTION IN T-CELL DEVELOPMENT</scope>
</reference>
<reference key="9">
    <citation type="journal article" date="2008" name="J. Clin. Invest.">
        <title>T cell receptor-induced phosphoinositide-3-kinase p110delta activity is required for T cell localization to antigenic tissue in mice.</title>
        <authorList>
            <person name="Jarmin S.J."/>
            <person name="David R."/>
            <person name="Ma L."/>
            <person name="Chai J.-G."/>
            <person name="Dewchand H."/>
            <person name="Takesono A."/>
            <person name="Ridley A.J."/>
            <person name="Okkenhaug K."/>
            <person name="Marelli-Berg F.M."/>
        </authorList>
    </citation>
    <scope>FUNCTION IN T-CELL MIGRATION</scope>
    <scope>ACTIVITY REGULATION</scope>
    <scope>DISRUPTION PHENOTYPE</scope>
    <scope>MUTAGENESIS OF ASP-910</scope>
</reference>
<reference key="10">
    <citation type="journal article" date="2008" name="J. Exp. Med.">
        <title>The p110 delta of PI3K plays a critical role in NK cell terminal maturation and cytokine/chemokine generation.</title>
        <authorList>
            <person name="Guo H."/>
            <person name="Samarakoon A."/>
            <person name="Vanhaesebroeck B."/>
            <person name="Malarkannan S."/>
        </authorList>
    </citation>
    <scope>FUNCTION IN NATURAL KILLER CELLS</scope>
    <scope>DISRUPTION PHENOTYPE</scope>
    <scope>MUTAGENESIS OF ASP-910</scope>
</reference>
<reference key="11">
    <citation type="journal article" date="2009" name="Proc. Natl. Acad. Sci. U.S.A.">
        <title>p110gamma and p110delta isoforms of phosphoinositide 3-kinase differentially regulate natural killer cell migration in health and disease.</title>
        <authorList>
            <person name="Saudemont A."/>
            <person name="Garcon F."/>
            <person name="Yadi H."/>
            <person name="Roche-Molina M."/>
            <person name="Kim N."/>
            <person name="Segonds-Pichon A."/>
            <person name="Martin-Fontecha A."/>
            <person name="Okkenhaug K."/>
            <person name="Colucci F."/>
        </authorList>
    </citation>
    <scope>FUNCTION IN NATURAL KILLER CELL MIGRATION</scope>
    <scope>ACTIVITY REGULATION</scope>
</reference>
<reference key="12">
    <citation type="journal article" date="2010" name="Cell">
        <title>A tissue-specific atlas of mouse protein phosphorylation and expression.</title>
        <authorList>
            <person name="Huttlin E.L."/>
            <person name="Jedrychowski M.P."/>
            <person name="Elias J.E."/>
            <person name="Goswami T."/>
            <person name="Rad R."/>
            <person name="Beausoleil S.A."/>
            <person name="Villen J."/>
            <person name="Haas W."/>
            <person name="Sowa M.E."/>
            <person name="Gygi S.P."/>
        </authorList>
    </citation>
    <scope>IDENTIFICATION BY MASS SPECTROMETRY [LARGE SCALE ANALYSIS]</scope>
    <source>
        <tissue>Spleen</tissue>
    </source>
</reference>
<reference key="13">
    <citation type="journal article" date="2012" name="Oncogene">
        <title>p37delta is a new isoform of PI3K p110delta that increases cell proliferation and is overexpressed in tumors.</title>
        <authorList>
            <person name="Fransson S."/>
            <person name="Uv A."/>
            <person name="Eriksson H."/>
            <person name="Andersson M.K."/>
            <person name="Wettergren Y."/>
            <person name="Bergo M."/>
            <person name="Ejeskar K."/>
        </authorList>
    </citation>
    <scope>ALTERNATIVE SPLICING (ISOFORM 2)</scope>
    <scope>TISSUE SPECIFICITY</scope>
    <source>
        <tissue>Peripheral blood leukocyte</tissue>
    </source>
</reference>
<reference key="14">
    <citation type="journal article" date="2010" name="Nat. Chem. Biol.">
        <title>The p110 delta structure: mechanisms for selectivity and potency of new PI(3)K inhibitors.</title>
        <authorList>
            <person name="Berndt A."/>
            <person name="Miller S."/>
            <person name="Williams O."/>
            <person name="Le D.D."/>
            <person name="Houseman B.T."/>
            <person name="Pacold J.I."/>
            <person name="Gorrec F."/>
            <person name="Hon W.-C."/>
            <person name="Liu Y."/>
            <person name="Rommel C."/>
            <person name="Gaillard P."/>
            <person name="Ruckle T."/>
            <person name="Schwarz M.K."/>
            <person name="Shokat K.M."/>
            <person name="Shaw J.P."/>
            <person name="Williams R.L."/>
        </authorList>
    </citation>
    <scope>X-RAY CRYSTALLOGRAPHY (1.9 ANGSTROMS) OF 106-1043 IN A COMPLEX WITH IC87114; PIK-39; SW13; SW14; SW30; DL06; DL07; ZSTK474; AS5; GDC-0941; INK654; INK666 AND AS15</scope>
</reference>
<accession>O35904</accession>
<accession>Q8CJ28</accession>
<feature type="chain" id="PRO_0000088791" description="Phosphatidylinositol 4,5-bisphosphate 3-kinase catalytic subunit delta isoform">
    <location>
        <begin position="1"/>
        <end position="1043"/>
    </location>
</feature>
<feature type="domain" description="PI3K-ABD" evidence="4">
    <location>
        <begin position="16"/>
        <end position="105"/>
    </location>
</feature>
<feature type="domain" description="PI3K-RBD" evidence="6">
    <location>
        <begin position="187"/>
        <end position="278"/>
    </location>
</feature>
<feature type="domain" description="C2 PI3K-type" evidence="7">
    <location>
        <begin position="319"/>
        <end position="476"/>
    </location>
</feature>
<feature type="domain" description="PIK helical" evidence="5">
    <location>
        <begin position="496"/>
        <end position="673"/>
    </location>
</feature>
<feature type="domain" description="PI3K/PI4K catalytic" evidence="3">
    <location>
        <begin position="744"/>
        <end position="1026"/>
    </location>
</feature>
<feature type="region of interest" description="Disordered" evidence="8">
    <location>
        <begin position="287"/>
        <end position="312"/>
    </location>
</feature>
<feature type="region of interest" description="G-loop" evidence="3">
    <location>
        <begin position="750"/>
        <end position="756"/>
    </location>
</feature>
<feature type="region of interest" description="Catalytic loop" evidence="3">
    <location>
        <begin position="889"/>
        <end position="897"/>
    </location>
</feature>
<feature type="region of interest" description="Activation loop" evidence="3">
    <location>
        <begin position="908"/>
        <end position="934"/>
    </location>
</feature>
<feature type="modified residue" description="Phosphotyrosine" evidence="2">
    <location>
        <position position="523"/>
    </location>
</feature>
<feature type="modified residue" description="Phosphoserine; by autocatalysis" evidence="2">
    <location>
        <position position="1038"/>
    </location>
</feature>
<feature type="splice variant" id="VSP_044411" description="In isoform 2." evidence="19">
    <original>ESFTFQVSTKDM</original>
    <variation>VSPSPIPSPSSI</variation>
    <location>
        <begin position="201"/>
        <end position="212"/>
    </location>
</feature>
<feature type="splice variant" id="VSP_044412" description="In isoform 2." evidence="19">
    <location>
        <begin position="213"/>
        <end position="1043"/>
    </location>
</feature>
<feature type="mutagenesis site" description="Inhibits lipid kinase activity. Mice are viable and fertile but display defective adaptive and innate immune responses Signaling defects in B-cells, T-cells, mast cells and natural killer cells. Reduced B and T-cell receptor signaling. Affects development and differentiation of B -ells. Reduced memory T-cell number. Affects B- and T-cell proliferation. Attenuates immune responses in vivo. Induces inflammatory bowel disease development. Lost TCR-induced migration and localization to antigenic tissue. Affects natural killer cell maturation and cytokine production." evidence="9 12 14 15">
    <original>D</original>
    <variation>A</variation>
    <location>
        <position position="910"/>
    </location>
</feature>
<feature type="sequence conflict" description="In Ref. 1; AAC25676." evidence="19" ref="1">
    <original>G</original>
    <variation>A</variation>
    <location>
        <position position="122"/>
    </location>
</feature>
<feature type="sequence conflict" description="In Ref. 1; AAC25676." evidence="19" ref="1">
    <original>F</original>
    <variation>S</variation>
    <location>
        <position position="584"/>
    </location>
</feature>
<feature type="sequence conflict" description="In Ref. 1; AAC25676." evidence="19" ref="1">
    <original>R</original>
    <variation>H</variation>
    <location>
        <position position="651"/>
    </location>
</feature>
<feature type="helix" evidence="21">
    <location>
        <begin position="110"/>
        <end position="121"/>
    </location>
</feature>
<feature type="helix" evidence="21">
    <location>
        <begin position="126"/>
        <end position="130"/>
    </location>
</feature>
<feature type="helix" evidence="21">
    <location>
        <begin position="134"/>
        <end position="154"/>
    </location>
</feature>
<feature type="helix" evidence="21">
    <location>
        <begin position="159"/>
        <end position="166"/>
    </location>
</feature>
<feature type="helix" evidence="29">
    <location>
        <begin position="173"/>
        <end position="175"/>
    </location>
</feature>
<feature type="strand" evidence="21">
    <location>
        <begin position="189"/>
        <end position="198"/>
    </location>
</feature>
<feature type="strand" evidence="21">
    <location>
        <begin position="202"/>
        <end position="208"/>
    </location>
</feature>
<feature type="helix" evidence="21">
    <location>
        <begin position="213"/>
        <end position="227"/>
    </location>
</feature>
<feature type="helix" evidence="21">
    <location>
        <begin position="236"/>
        <end position="238"/>
    </location>
</feature>
<feature type="strand" evidence="21">
    <location>
        <begin position="239"/>
        <end position="243"/>
    </location>
</feature>
<feature type="turn" evidence="28">
    <location>
        <begin position="244"/>
        <end position="247"/>
    </location>
</feature>
<feature type="strand" evidence="28">
    <location>
        <begin position="248"/>
        <end position="250"/>
    </location>
</feature>
<feature type="strand" evidence="27">
    <location>
        <begin position="252"/>
        <end position="254"/>
    </location>
</feature>
<feature type="helix" evidence="21">
    <location>
        <begin position="256"/>
        <end position="258"/>
    </location>
</feature>
<feature type="helix" evidence="21">
    <location>
        <begin position="260"/>
        <end position="268"/>
    </location>
</feature>
<feature type="strand" evidence="21">
    <location>
        <begin position="273"/>
        <end position="278"/>
    </location>
</feature>
<feature type="helix" evidence="21">
    <location>
        <begin position="279"/>
        <end position="288"/>
    </location>
</feature>
<feature type="helix" evidence="29">
    <location>
        <begin position="316"/>
        <end position="318"/>
    </location>
</feature>
<feature type="strand" evidence="21">
    <location>
        <begin position="321"/>
        <end position="331"/>
    </location>
</feature>
<feature type="strand" evidence="21">
    <location>
        <begin position="340"/>
        <end position="349"/>
    </location>
</feature>
<feature type="strand" evidence="21">
    <location>
        <begin position="352"/>
        <end position="355"/>
    </location>
</feature>
<feature type="strand" evidence="21">
    <location>
        <begin position="363"/>
        <end position="365"/>
    </location>
</feature>
<feature type="strand" evidence="21">
    <location>
        <begin position="370"/>
        <end position="380"/>
    </location>
</feature>
<feature type="helix" evidence="21">
    <location>
        <begin position="381"/>
        <end position="383"/>
    </location>
</feature>
<feature type="strand" evidence="21">
    <location>
        <begin position="389"/>
        <end position="397"/>
    </location>
</feature>
<feature type="strand" evidence="21">
    <location>
        <begin position="416"/>
        <end position="426"/>
    </location>
</feature>
<feature type="strand" evidence="21">
    <location>
        <begin position="430"/>
        <end position="432"/>
    </location>
</feature>
<feature type="strand" evidence="21">
    <location>
        <begin position="435"/>
        <end position="440"/>
    </location>
</feature>
<feature type="strand" evidence="24">
    <location>
        <begin position="455"/>
        <end position="457"/>
    </location>
</feature>
<feature type="turn" evidence="21">
    <location>
        <begin position="465"/>
        <end position="467"/>
    </location>
</feature>
<feature type="strand" evidence="21">
    <location>
        <begin position="470"/>
        <end position="475"/>
    </location>
</feature>
<feature type="strand" evidence="29">
    <location>
        <begin position="479"/>
        <end position="481"/>
    </location>
</feature>
<feature type="helix" evidence="21">
    <location>
        <begin position="488"/>
        <end position="493"/>
    </location>
</feature>
<feature type="helix" evidence="21">
    <location>
        <begin position="511"/>
        <end position="514"/>
    </location>
</feature>
<feature type="helix" evidence="21">
    <location>
        <begin position="524"/>
        <end position="532"/>
    </location>
</feature>
<feature type="helix" evidence="21">
    <location>
        <begin position="534"/>
        <end position="540"/>
    </location>
</feature>
<feature type="helix" evidence="21">
    <location>
        <begin position="542"/>
        <end position="544"/>
    </location>
</feature>
<feature type="helix" evidence="21">
    <location>
        <begin position="545"/>
        <end position="549"/>
    </location>
</feature>
<feature type="strand" evidence="25">
    <location>
        <begin position="554"/>
        <end position="556"/>
    </location>
</feature>
<feature type="helix" evidence="21">
    <location>
        <begin position="557"/>
        <end position="568"/>
    </location>
</feature>
<feature type="helix" evidence="21">
    <location>
        <begin position="575"/>
        <end position="581"/>
    </location>
</feature>
<feature type="helix" evidence="21">
    <location>
        <begin position="589"/>
        <end position="599"/>
    </location>
</feature>
<feature type="helix" evidence="21">
    <location>
        <begin position="604"/>
        <end position="617"/>
    </location>
</feature>
<feature type="helix" evidence="21">
    <location>
        <begin position="618"/>
        <end position="620"/>
    </location>
</feature>
<feature type="strand" evidence="21">
    <location>
        <begin position="622"/>
        <end position="625"/>
    </location>
</feature>
<feature type="helix" evidence="21">
    <location>
        <begin position="627"/>
        <end position="638"/>
    </location>
</feature>
<feature type="helix" evidence="21">
    <location>
        <begin position="640"/>
        <end position="651"/>
    </location>
</feature>
<feature type="turn" evidence="21">
    <location>
        <begin position="652"/>
        <end position="655"/>
    </location>
</feature>
<feature type="helix" evidence="21">
    <location>
        <begin position="657"/>
        <end position="673"/>
    </location>
</feature>
<feature type="helix" evidence="21">
    <location>
        <begin position="675"/>
        <end position="701"/>
    </location>
</feature>
<feature type="turn" evidence="21">
    <location>
        <begin position="702"/>
        <end position="704"/>
    </location>
</feature>
<feature type="helix" evidence="21">
    <location>
        <begin position="707"/>
        <end position="718"/>
    </location>
</feature>
<feature type="helix" evidence="21">
    <location>
        <begin position="721"/>
        <end position="727"/>
    </location>
</feature>
<feature type="strand" evidence="21">
    <location>
        <begin position="728"/>
        <end position="732"/>
    </location>
</feature>
<feature type="strand" evidence="21">
    <location>
        <begin position="735"/>
        <end position="740"/>
    </location>
</feature>
<feature type="helix" evidence="21">
    <location>
        <begin position="745"/>
        <end position="747"/>
    </location>
</feature>
<feature type="strand" evidence="23">
    <location>
        <begin position="753"/>
        <end position="755"/>
    </location>
</feature>
<feature type="strand" evidence="21">
    <location>
        <begin position="758"/>
        <end position="763"/>
    </location>
</feature>
<feature type="turn" evidence="21">
    <location>
        <begin position="765"/>
        <end position="767"/>
    </location>
</feature>
<feature type="helix" evidence="21">
    <location>
        <begin position="768"/>
        <end position="771"/>
    </location>
</feature>
<feature type="strand" evidence="21">
    <location>
        <begin position="773"/>
        <end position="781"/>
    </location>
</feature>
<feature type="helix" evidence="21">
    <location>
        <begin position="784"/>
        <end position="802"/>
    </location>
</feature>
<feature type="strand" evidence="21">
    <location>
        <begin position="814"/>
        <end position="818"/>
    </location>
</feature>
<feature type="strand" evidence="21">
    <location>
        <begin position="821"/>
        <end position="825"/>
    </location>
</feature>
<feature type="strand" evidence="21">
    <location>
        <begin position="828"/>
        <end position="832"/>
    </location>
</feature>
<feature type="helix" evidence="21">
    <location>
        <begin position="833"/>
        <end position="837"/>
    </location>
</feature>
<feature type="strand" evidence="21">
    <location>
        <begin position="841"/>
        <end position="843"/>
    </location>
</feature>
<feature type="helix" evidence="21">
    <location>
        <begin position="850"/>
        <end position="852"/>
    </location>
</feature>
<feature type="helix" evidence="21">
    <location>
        <begin position="853"/>
        <end position="861"/>
    </location>
</feature>
<feature type="turn" evidence="22">
    <location>
        <begin position="863"/>
        <end position="865"/>
    </location>
</feature>
<feature type="helix" evidence="21">
    <location>
        <begin position="866"/>
        <end position="888"/>
    </location>
</feature>
<feature type="strand" evidence="21">
    <location>
        <begin position="897"/>
        <end position="901"/>
    </location>
</feature>
<feature type="strand" evidence="21">
    <location>
        <begin position="906"/>
        <end position="908"/>
    </location>
</feature>
<feature type="helix" evidence="21">
    <location>
        <begin position="935"/>
        <end position="941"/>
    </location>
</feature>
<feature type="turn" evidence="21">
    <location>
        <begin position="942"/>
        <end position="944"/>
    </location>
</feature>
<feature type="helix" evidence="21">
    <location>
        <begin position="949"/>
        <end position="968"/>
    </location>
</feature>
<feature type="helix" evidence="21">
    <location>
        <begin position="970"/>
        <end position="980"/>
    </location>
</feature>
<feature type="helix" evidence="21">
    <location>
        <begin position="981"/>
        <end position="983"/>
    </location>
</feature>
<feature type="strand" evidence="27">
    <location>
        <begin position="988"/>
        <end position="990"/>
    </location>
</feature>
<feature type="helix" evidence="21">
    <location>
        <begin position="991"/>
        <end position="1001"/>
    </location>
</feature>
<feature type="turn" evidence="21">
    <location>
        <begin position="1002"/>
        <end position="1004"/>
    </location>
</feature>
<feature type="helix" evidence="21">
    <location>
        <begin position="1007"/>
        <end position="1024"/>
    </location>
</feature>
<feature type="helix" evidence="26">
    <location>
        <begin position="1026"/>
        <end position="1030"/>
    </location>
</feature>